<reference key="1">
    <citation type="journal article" date="2013" name="PLoS Genet.">
        <title>Plant-symbiotic fungi as chemical engineers: Multi-genome analysis of the Clavicipitaceae reveals dynamics of alkaloid loci.</title>
        <authorList>
            <person name="Schardl C.L."/>
            <person name="Young C.A."/>
            <person name="Hesse U."/>
            <person name="Amyotte S.G."/>
            <person name="Andreeva K."/>
            <person name="Calie P.J."/>
            <person name="Fleetwood D.J."/>
            <person name="Haws D.C."/>
            <person name="Moore N."/>
            <person name="Oeser B."/>
            <person name="Panaccione D.G."/>
            <person name="Schweri K.K."/>
            <person name="Voisey C.R."/>
            <person name="Farman M.L."/>
            <person name="Jaromczyk J.W."/>
            <person name="Roe B.A."/>
            <person name="O'Sullivan D.M."/>
            <person name="Scott B."/>
            <person name="Tudzynski P."/>
            <person name="An Z."/>
            <person name="Arnaoudova E.G."/>
            <person name="Bullock C.T."/>
            <person name="Charlton N.D."/>
            <person name="Chen L."/>
            <person name="Cox M."/>
            <person name="Dinkins R.D."/>
            <person name="Florea S."/>
            <person name="Glenn A.E."/>
            <person name="Gordon A."/>
            <person name="Gueldener U."/>
            <person name="Harris D.R."/>
            <person name="Hollin W."/>
            <person name="Jaromczyk J."/>
            <person name="Johnson R.D."/>
            <person name="Khan A.K."/>
            <person name="Leistner E."/>
            <person name="Leuchtmann A."/>
            <person name="Li C."/>
            <person name="Liu J."/>
            <person name="Liu J."/>
            <person name="Liu M."/>
            <person name="Mace W."/>
            <person name="Machado C."/>
            <person name="Nagabhyru P."/>
            <person name="Pan J."/>
            <person name="Schmid J."/>
            <person name="Sugawara K."/>
            <person name="Steiner U."/>
            <person name="Takach J.E."/>
            <person name="Tanaka E."/>
            <person name="Webb J.S."/>
            <person name="Wilson E.V."/>
            <person name="Wiseman J.L."/>
            <person name="Yoshida R."/>
            <person name="Zeng Z."/>
        </authorList>
    </citation>
    <scope>NUCLEOTIDE SEQUENCE [GENOMIC DNA]</scope>
    <scope>IDENTIFICATION</scope>
    <scope>FUNCTION</scope>
    <source>
        <strain>RRC-1481</strain>
    </source>
</reference>
<reference key="2">
    <citation type="journal article" date="2018" name="Appl. Microbiol. Biotechnol.">
        <title>Inactivation of the indole-diterpene biosynthetic gene cluster of Claviceps paspali by Agrobacterium-mediated gene replacement.</title>
        <authorList>
            <person name="Kozak L."/>
            <person name="Szilagyi Z."/>
            <person name="Vago B."/>
            <person name="Kakuk A."/>
            <person name="Toth L."/>
            <person name="Molnar I."/>
            <person name="Pocsi I."/>
        </authorList>
    </citation>
    <scope>FUNCTION</scope>
    <scope>DISRUPTION PHENOTYPE</scope>
    <scope>PATHWAY</scope>
</reference>
<reference key="3">
    <citation type="journal article" date="2020" name="Folia Microbiol. (Praha)">
        <title>Functional characterization of the idtF and idtP genes in the Claviceps paspali indole diterpene biosynthetic gene cluster.</title>
        <authorList>
            <person name="Kozak L."/>
            <person name="Szilagyi Z."/>
            <person name="Toth L."/>
            <person name="Pocsi I."/>
            <person name="Molnar I."/>
        </authorList>
    </citation>
    <scope>FUNCTION</scope>
</reference>
<proteinExistence type="inferred from homology"/>
<organism>
    <name type="scientific">Claviceps paspali</name>
    <name type="common">Rye ergot fungus</name>
    <dbReference type="NCBI Taxonomy" id="40601"/>
    <lineage>
        <taxon>Eukaryota</taxon>
        <taxon>Fungi</taxon>
        <taxon>Dikarya</taxon>
        <taxon>Ascomycota</taxon>
        <taxon>Pezizomycotina</taxon>
        <taxon>Sordariomycetes</taxon>
        <taxon>Hypocreomycetidae</taxon>
        <taxon>Hypocreales</taxon>
        <taxon>Clavicipitaceae</taxon>
        <taxon>Claviceps</taxon>
    </lineage>
</organism>
<keyword id="KW-0460">Magnesium</keyword>
<keyword id="KW-0479">Metal-binding</keyword>
<keyword id="KW-0808">Transferase</keyword>
<accession>J7FIX8</accession>
<dbReference type="EC" id="2.5.1.-" evidence="7"/>
<dbReference type="EC" id="2.5.1.1" evidence="1"/>
<dbReference type="EC" id="2.5.1.29" evidence="1"/>
<dbReference type="EC" id="2.5.1.10" evidence="1"/>
<dbReference type="EMBL" id="JN613321">
    <property type="protein sequence ID" value="AFO85420.1"/>
    <property type="molecule type" value="Genomic_DNA"/>
</dbReference>
<dbReference type="SMR" id="J7FIX8"/>
<dbReference type="GO" id="GO:0004337">
    <property type="term" value="F:(2E,6E)-farnesyl diphosphate synthase activity"/>
    <property type="evidence" value="ECO:0007669"/>
    <property type="project" value="UniProtKB-EC"/>
</dbReference>
<dbReference type="GO" id="GO:0004161">
    <property type="term" value="F:dimethylallyltranstransferase activity"/>
    <property type="evidence" value="ECO:0007669"/>
    <property type="project" value="UniProtKB-EC"/>
</dbReference>
<dbReference type="GO" id="GO:0004311">
    <property type="term" value="F:geranylgeranyl diphosphate synthase activity"/>
    <property type="evidence" value="ECO:0007669"/>
    <property type="project" value="UniProtKB-EC"/>
</dbReference>
<dbReference type="GO" id="GO:0046872">
    <property type="term" value="F:metal ion binding"/>
    <property type="evidence" value="ECO:0007669"/>
    <property type="project" value="UniProtKB-KW"/>
</dbReference>
<dbReference type="GO" id="GO:0046165">
    <property type="term" value="P:alcohol biosynthetic process"/>
    <property type="evidence" value="ECO:0007669"/>
    <property type="project" value="UniProtKB-ARBA"/>
</dbReference>
<dbReference type="GO" id="GO:0008299">
    <property type="term" value="P:isoprenoid biosynthetic process"/>
    <property type="evidence" value="ECO:0007669"/>
    <property type="project" value="InterPro"/>
</dbReference>
<dbReference type="GO" id="GO:0043386">
    <property type="term" value="P:mycotoxin biosynthetic process"/>
    <property type="evidence" value="ECO:0007669"/>
    <property type="project" value="UniProtKB-ARBA"/>
</dbReference>
<dbReference type="CDD" id="cd00685">
    <property type="entry name" value="Trans_IPPS_HT"/>
    <property type="match status" value="1"/>
</dbReference>
<dbReference type="Gene3D" id="1.10.600.10">
    <property type="entry name" value="Farnesyl Diphosphate Synthase"/>
    <property type="match status" value="1"/>
</dbReference>
<dbReference type="InterPro" id="IPR008949">
    <property type="entry name" value="Isoprenoid_synthase_dom_sf"/>
</dbReference>
<dbReference type="InterPro" id="IPR000092">
    <property type="entry name" value="Polyprenyl_synt"/>
</dbReference>
<dbReference type="InterPro" id="IPR033749">
    <property type="entry name" value="Polyprenyl_synt_CS"/>
</dbReference>
<dbReference type="PANTHER" id="PTHR12001">
    <property type="entry name" value="GERANYLGERANYL PYROPHOSPHATE SYNTHASE"/>
    <property type="match status" value="1"/>
</dbReference>
<dbReference type="PANTHER" id="PTHR12001:SF70">
    <property type="entry name" value="PYROPHOSPHATE SYNTHETASE ATMG, PUTATIVE (AFU_ORTHOLOGUE AFUA_8G02400)-RELATED"/>
    <property type="match status" value="1"/>
</dbReference>
<dbReference type="Pfam" id="PF00348">
    <property type="entry name" value="polyprenyl_synt"/>
    <property type="match status" value="1"/>
</dbReference>
<dbReference type="SFLD" id="SFLDS00005">
    <property type="entry name" value="Isoprenoid_Synthase_Type_I"/>
    <property type="match status" value="1"/>
</dbReference>
<dbReference type="SUPFAM" id="SSF48576">
    <property type="entry name" value="Terpenoid synthases"/>
    <property type="match status" value="1"/>
</dbReference>
<dbReference type="PROSITE" id="PS00723">
    <property type="entry name" value="POLYPRENYL_SYNTHASE_1"/>
    <property type="match status" value="1"/>
</dbReference>
<dbReference type="PROSITE" id="PS00444">
    <property type="entry name" value="POLYPRENYL_SYNTHASE_2"/>
    <property type="match status" value="1"/>
</dbReference>
<name>IDTG_CLAPA</name>
<gene>
    <name evidence="5" type="primary">idtG</name>
</gene>
<sequence length="334" mass="37624">MAPSPIMPRYHVGPMASTRRAISKKGFPRTRSFPVLTAPLDYLRDSPGKDIRSGLTDAFNEFLCVPEDKVVTIKRIIDLLHNASLLIDDIQDDSKLRRGVPVAHSIFGIAQTINSANLAYFLAQQELKKLSNPDAFAIYTDELINLHRGQGMELHWRESLHCPTEEEYMRMVQNKTGGLFRLAIRLLQGESRSDRDYVPLVDTLGTLFQIRDDYQNLQSDVYSKNKGFCEDISEGKFSYPVIHSIRARPGDLRLLNILKQRSEDLMVKQYAVSYINSTGSFEFCRGKIDCLAQWANLQLAALEEAEGAGRGDKLRAVLRLLDMKASGKQADVAS</sequence>
<comment type="function">
    <text evidence="2 3 4 7">Geranylgeranyl pyrophosphate synthase; part of the gene cluster that mediates the biosynthesis of paspalitrems, indole-diterpene (IDT) mycotoxins that are potent tremorgens in mammals (PubMed:23468653, PubMed:29457197, PubMed:32077051). The geranylgeranyl diphosphate (GGPP) synthase idtG is proposed to catalyze the first step in IDT biosynthesis via catalysis of a series of iterative condensations of isopentenyl diphosphate (IPP) with dimethylallyl diphosphate (DMAPP), geranyl diphosphate (GPP), and farnesyl diphosphate (FPP), to form GGPP (Probable). Condensation of indole-3-glycerol phosphate with GGPP by the prenyltransferase idtC then forms 3-geranylgeranylindole (3-GGI) (Probable). Epoxidation of the two terminal alkenes of the geranylgeranyl moiety by the FAD-dependent monooxygenase idtM, and cyclization by the terpene cyclase idtB then leads to the production of paspaline (Probable). The cytochrome P450 monooxygenase idtP then catalyzes oxidative elimination of the pendant methyl group at C-12 of paspaline and generates the C-10 ketone to yield 13-desoxypaxilline (PubMed:32077051). The cytochrome P450 monooxygenase idtQ may catalyze the C-13 oxidation of 13-desoxypaxilline to afford paxilline (Probable). Considering that both paspalicine and paxilline were detected in C.paspali, idtQ also catalyzes the formation of paspalinine from 13-desoxypaxilline via paspalicine as an intermediate (Probable). Finally, the alpha-prenyltransferase idtF prenylates paspalinine at the C-20 or the C-21 positions to yield paspalitrems A and C, respectively (PubMed:32077051). The hydroxylation of paspalitrem A at C-32 by a still unknown oxidase affords paspalitrem B (Probable).</text>
</comment>
<comment type="catalytic activity">
    <reaction evidence="1">
        <text>isopentenyl diphosphate + dimethylallyl diphosphate = (2E)-geranyl diphosphate + diphosphate</text>
        <dbReference type="Rhea" id="RHEA:22408"/>
        <dbReference type="ChEBI" id="CHEBI:33019"/>
        <dbReference type="ChEBI" id="CHEBI:57623"/>
        <dbReference type="ChEBI" id="CHEBI:58057"/>
        <dbReference type="ChEBI" id="CHEBI:128769"/>
        <dbReference type="EC" id="2.5.1.1"/>
    </reaction>
</comment>
<comment type="catalytic activity">
    <reaction evidence="1">
        <text>isopentenyl diphosphate + (2E)-geranyl diphosphate = (2E,6E)-farnesyl diphosphate + diphosphate</text>
        <dbReference type="Rhea" id="RHEA:19361"/>
        <dbReference type="ChEBI" id="CHEBI:33019"/>
        <dbReference type="ChEBI" id="CHEBI:58057"/>
        <dbReference type="ChEBI" id="CHEBI:128769"/>
        <dbReference type="ChEBI" id="CHEBI:175763"/>
        <dbReference type="EC" id="2.5.1.10"/>
    </reaction>
</comment>
<comment type="catalytic activity">
    <reaction evidence="1">
        <text>isopentenyl diphosphate + (2E,6E)-farnesyl diphosphate = (2E,6E,10E)-geranylgeranyl diphosphate + diphosphate</text>
        <dbReference type="Rhea" id="RHEA:17653"/>
        <dbReference type="ChEBI" id="CHEBI:33019"/>
        <dbReference type="ChEBI" id="CHEBI:58756"/>
        <dbReference type="ChEBI" id="CHEBI:128769"/>
        <dbReference type="ChEBI" id="CHEBI:175763"/>
        <dbReference type="EC" id="2.5.1.29"/>
    </reaction>
</comment>
<comment type="cofactor">
    <cofactor evidence="1">
        <name>Mg(2+)</name>
        <dbReference type="ChEBI" id="CHEBI:18420"/>
    </cofactor>
    <text evidence="1">Binds 3 Mg(2+) ions per subunit.</text>
</comment>
<comment type="pathway">
    <text evidence="3">Secondary metabolite biosynthesis.</text>
</comment>
<comment type="disruption phenotype">
    <text evidence="3">Simultaneous disruption of idtB, idtC, idtF and idtG eliminates the biosynthesis of the whole spectrum of indole-diterpenes reported to be produced by C.paspali, including paspaline, paxilline, paspalinine, paspalitrem A and paspalitrem B.</text>
</comment>
<comment type="similarity">
    <text evidence="6">Belongs to the FPP/GGPP synthase family.</text>
</comment>
<feature type="chain" id="PRO_0000451434" description="Geranylgeranyl pyrophosphate synthase idtG">
    <location>
        <begin position="1"/>
        <end position="334"/>
    </location>
</feature>
<feature type="binding site" evidence="1">
    <location>
        <position position="49"/>
    </location>
    <ligand>
        <name>isopentenyl diphosphate</name>
        <dbReference type="ChEBI" id="CHEBI:128769"/>
    </ligand>
</feature>
<feature type="binding site" evidence="1">
    <location>
        <position position="52"/>
    </location>
    <ligand>
        <name>isopentenyl diphosphate</name>
        <dbReference type="ChEBI" id="CHEBI:128769"/>
    </ligand>
</feature>
<feature type="binding site" evidence="1">
    <location>
        <position position="81"/>
    </location>
    <ligand>
        <name>isopentenyl diphosphate</name>
        <dbReference type="ChEBI" id="CHEBI:128769"/>
    </ligand>
</feature>
<feature type="binding site" evidence="1">
    <location>
        <position position="88"/>
    </location>
    <ligand>
        <name>Mg(2+)</name>
        <dbReference type="ChEBI" id="CHEBI:18420"/>
        <label>1</label>
    </ligand>
</feature>
<feature type="binding site" evidence="1">
    <location>
        <position position="88"/>
    </location>
    <ligand>
        <name>Mg(2+)</name>
        <dbReference type="ChEBI" id="CHEBI:18420"/>
        <label>2</label>
    </ligand>
</feature>
<feature type="binding site" evidence="1">
    <location>
        <position position="92"/>
    </location>
    <ligand>
        <name>Mg(2+)</name>
        <dbReference type="ChEBI" id="CHEBI:18420"/>
        <label>1</label>
    </ligand>
</feature>
<feature type="binding site" evidence="1">
    <location>
        <position position="92"/>
    </location>
    <ligand>
        <name>Mg(2+)</name>
        <dbReference type="ChEBI" id="CHEBI:18420"/>
        <label>2</label>
    </ligand>
</feature>
<feature type="binding site" evidence="1">
    <location>
        <position position="97"/>
    </location>
    <ligand>
        <name>dimethylallyl diphosphate</name>
        <dbReference type="ChEBI" id="CHEBI:57623"/>
    </ligand>
</feature>
<feature type="binding site" evidence="1">
    <location>
        <position position="98"/>
    </location>
    <ligand>
        <name>isopentenyl diphosphate</name>
        <dbReference type="ChEBI" id="CHEBI:128769"/>
    </ligand>
</feature>
<feature type="binding site" evidence="1">
    <location>
        <position position="175"/>
    </location>
    <ligand>
        <name>dimethylallyl diphosphate</name>
        <dbReference type="ChEBI" id="CHEBI:57623"/>
    </ligand>
</feature>
<feature type="binding site" evidence="1">
    <location>
        <position position="176"/>
    </location>
    <ligand>
        <name>dimethylallyl diphosphate</name>
        <dbReference type="ChEBI" id="CHEBI:57623"/>
    </ligand>
</feature>
<feature type="binding site" evidence="1">
    <location>
        <position position="209"/>
    </location>
    <ligand>
        <name>dimethylallyl diphosphate</name>
        <dbReference type="ChEBI" id="CHEBI:57623"/>
    </ligand>
</feature>
<feature type="binding site" evidence="1">
    <location>
        <position position="212"/>
    </location>
    <ligand>
        <name>Mg(2+)</name>
        <dbReference type="ChEBI" id="CHEBI:18420"/>
        <label>3</label>
    </ligand>
</feature>
<feature type="binding site" evidence="1">
    <location>
        <position position="216"/>
    </location>
    <ligand>
        <name>dimethylallyl diphosphate</name>
        <dbReference type="ChEBI" id="CHEBI:57623"/>
    </ligand>
</feature>
<feature type="binding site" evidence="1">
    <location>
        <position position="226"/>
    </location>
    <ligand>
        <name>dimethylallyl diphosphate</name>
        <dbReference type="ChEBI" id="CHEBI:57623"/>
    </ligand>
</feature>
<feature type="binding site" evidence="1">
    <location>
        <position position="236"/>
    </location>
    <ligand>
        <name>dimethylallyl diphosphate</name>
        <dbReference type="ChEBI" id="CHEBI:57623"/>
    </ligand>
</feature>
<feature type="site" description="Important for determining product chain length" evidence="1">
    <location>
        <position position="120"/>
    </location>
</feature>
<evidence type="ECO:0000250" key="1">
    <source>
        <dbReference type="UniProtKB" id="Q12051"/>
    </source>
</evidence>
<evidence type="ECO:0000269" key="2">
    <source>
    </source>
</evidence>
<evidence type="ECO:0000269" key="3">
    <source>
    </source>
</evidence>
<evidence type="ECO:0000269" key="4">
    <source>
    </source>
</evidence>
<evidence type="ECO:0000303" key="5">
    <source>
    </source>
</evidence>
<evidence type="ECO:0000305" key="6"/>
<evidence type="ECO:0000305" key="7">
    <source>
    </source>
</evidence>
<protein>
    <recommendedName>
        <fullName evidence="5">Geranylgeranyl pyrophosphate synthase idtG</fullName>
        <shortName evidence="6">GGPP synthase</shortName>
        <shortName evidence="6">GGPPSase</shortName>
        <ecNumber evidence="7">2.5.1.-</ecNumber>
    </recommendedName>
    <alternativeName>
        <fullName evidence="1">(2E,6E)-farnesyl diphosphate synthase</fullName>
    </alternativeName>
    <alternativeName>
        <fullName evidence="1">Dimethylallyltranstransferase</fullName>
        <ecNumber evidence="1">2.5.1.1</ecNumber>
    </alternativeName>
    <alternativeName>
        <fullName evidence="1">Farnesyl diphosphate synthase</fullName>
    </alternativeName>
    <alternativeName>
        <fullName evidence="1">Farnesyltranstransferase</fullName>
        <ecNumber evidence="1">2.5.1.29</ecNumber>
    </alternativeName>
    <alternativeName>
        <fullName evidence="1">Geranylgeranyl diphosphate synthase</fullName>
    </alternativeName>
    <alternativeName>
        <fullName evidence="1">Geranyltranstransferase</fullName>
        <ecNumber evidence="1">2.5.1.10</ecNumber>
    </alternativeName>
    <alternativeName>
        <fullName evidence="5">Indole-diterpene biosynthesis cluster protein G</fullName>
    </alternativeName>
</protein>